<sequence length="232" mass="24354">MKIGIIGAMEEEVTLLRDKIENRQTISLGGCEIYTGQLNGTEVALLKSGIGKVAAALGATLLLEHCKPDVIINTGSAGGLAPTLKVGDIVVSDEARYHDADVTAFGYEYGQLPGCPAGFKADDKLIAAAEACIAELNLNAVRGLIVSGDAFINGSVGLAKIRHNFPQAIAVEMEATAIAHVCHNFNVPFVVVRAISDVADQQSHLSFDEFLAVAAKQSSLMVESLVQKLAHG</sequence>
<accession>B1XD29</accession>
<feature type="chain" id="PRO_0000359294" description="5'-methylthioadenosine/S-adenosylhomocysteine nucleosidase">
    <location>
        <begin position="1"/>
        <end position="232"/>
    </location>
</feature>
<feature type="active site" description="Proton acceptor" evidence="1">
    <location>
        <position position="12"/>
    </location>
</feature>
<feature type="active site" description="Proton donor" evidence="1">
    <location>
        <position position="197"/>
    </location>
</feature>
<feature type="binding site" evidence="1">
    <location>
        <position position="78"/>
    </location>
    <ligand>
        <name>substrate</name>
    </ligand>
</feature>
<feature type="binding site" evidence="1">
    <location>
        <position position="152"/>
    </location>
    <ligand>
        <name>substrate</name>
    </ligand>
</feature>
<feature type="binding site" evidence="1">
    <location>
        <begin position="173"/>
        <end position="174"/>
    </location>
    <ligand>
        <name>substrate</name>
    </ligand>
</feature>
<proteinExistence type="inferred from homology"/>
<gene>
    <name evidence="1" type="primary">mtnN</name>
    <name type="ordered locus">ECDH10B_0139</name>
</gene>
<name>MTNN_ECODH</name>
<dbReference type="EC" id="3.2.2.9" evidence="1"/>
<dbReference type="EMBL" id="CP000948">
    <property type="protein sequence ID" value="ACB01338.1"/>
    <property type="molecule type" value="Genomic_DNA"/>
</dbReference>
<dbReference type="RefSeq" id="WP_000689844.1">
    <property type="nucleotide sequence ID" value="NC_010473.1"/>
</dbReference>
<dbReference type="SMR" id="B1XD29"/>
<dbReference type="GeneID" id="93777267"/>
<dbReference type="KEGG" id="ecd:ECDH10B_0139"/>
<dbReference type="HOGENOM" id="CLU_031248_2_2_6"/>
<dbReference type="UniPathway" id="UPA00904">
    <property type="reaction ID" value="UER00871"/>
</dbReference>
<dbReference type="GO" id="GO:0005829">
    <property type="term" value="C:cytosol"/>
    <property type="evidence" value="ECO:0007669"/>
    <property type="project" value="TreeGrafter"/>
</dbReference>
<dbReference type="GO" id="GO:0008782">
    <property type="term" value="F:adenosylhomocysteine nucleosidase activity"/>
    <property type="evidence" value="ECO:0007669"/>
    <property type="project" value="UniProtKB-UniRule"/>
</dbReference>
<dbReference type="GO" id="GO:0008930">
    <property type="term" value="F:methylthioadenosine nucleosidase activity"/>
    <property type="evidence" value="ECO:0007669"/>
    <property type="project" value="UniProtKB-UniRule"/>
</dbReference>
<dbReference type="GO" id="GO:0019509">
    <property type="term" value="P:L-methionine salvage from methylthioadenosine"/>
    <property type="evidence" value="ECO:0007669"/>
    <property type="project" value="UniProtKB-UniRule"/>
</dbReference>
<dbReference type="GO" id="GO:0019284">
    <property type="term" value="P:L-methionine salvage from S-adenosylmethionine"/>
    <property type="evidence" value="ECO:0007669"/>
    <property type="project" value="TreeGrafter"/>
</dbReference>
<dbReference type="GO" id="GO:0046124">
    <property type="term" value="P:purine deoxyribonucleoside catabolic process"/>
    <property type="evidence" value="ECO:0007669"/>
    <property type="project" value="UniProtKB-UniRule"/>
</dbReference>
<dbReference type="CDD" id="cd09008">
    <property type="entry name" value="MTAN"/>
    <property type="match status" value="1"/>
</dbReference>
<dbReference type="FunFam" id="3.40.50.1580:FF:000001">
    <property type="entry name" value="MTA/SAH nucleosidase family protein"/>
    <property type="match status" value="1"/>
</dbReference>
<dbReference type="Gene3D" id="3.40.50.1580">
    <property type="entry name" value="Nucleoside phosphorylase domain"/>
    <property type="match status" value="1"/>
</dbReference>
<dbReference type="HAMAP" id="MF_01684">
    <property type="entry name" value="Salvage_MtnN"/>
    <property type="match status" value="1"/>
</dbReference>
<dbReference type="InterPro" id="IPR010049">
    <property type="entry name" value="MTA_SAH_Nsdase"/>
</dbReference>
<dbReference type="InterPro" id="IPR000845">
    <property type="entry name" value="Nucleoside_phosphorylase_d"/>
</dbReference>
<dbReference type="InterPro" id="IPR035994">
    <property type="entry name" value="Nucleoside_phosphorylase_sf"/>
</dbReference>
<dbReference type="NCBIfam" id="TIGR01704">
    <property type="entry name" value="MTA_SAH-Nsdase"/>
    <property type="match status" value="1"/>
</dbReference>
<dbReference type="NCBIfam" id="NF004079">
    <property type="entry name" value="PRK05584.1"/>
    <property type="match status" value="1"/>
</dbReference>
<dbReference type="PANTHER" id="PTHR46832">
    <property type="entry name" value="5'-METHYLTHIOADENOSINE/S-ADENOSYLHOMOCYSTEINE NUCLEOSIDASE"/>
    <property type="match status" value="1"/>
</dbReference>
<dbReference type="PANTHER" id="PTHR46832:SF1">
    <property type="entry name" value="5'-METHYLTHIOADENOSINE_S-ADENOSYLHOMOCYSTEINE NUCLEOSIDASE"/>
    <property type="match status" value="1"/>
</dbReference>
<dbReference type="Pfam" id="PF01048">
    <property type="entry name" value="PNP_UDP_1"/>
    <property type="match status" value="1"/>
</dbReference>
<dbReference type="SUPFAM" id="SSF53167">
    <property type="entry name" value="Purine and uridine phosphorylases"/>
    <property type="match status" value="1"/>
</dbReference>
<organism>
    <name type="scientific">Escherichia coli (strain K12 / DH10B)</name>
    <dbReference type="NCBI Taxonomy" id="316385"/>
    <lineage>
        <taxon>Bacteria</taxon>
        <taxon>Pseudomonadati</taxon>
        <taxon>Pseudomonadota</taxon>
        <taxon>Gammaproteobacteria</taxon>
        <taxon>Enterobacterales</taxon>
        <taxon>Enterobacteriaceae</taxon>
        <taxon>Escherichia</taxon>
    </lineage>
</organism>
<evidence type="ECO:0000255" key="1">
    <source>
        <dbReference type="HAMAP-Rule" id="MF_01684"/>
    </source>
</evidence>
<keyword id="KW-0028">Amino-acid biosynthesis</keyword>
<keyword id="KW-0378">Hydrolase</keyword>
<keyword id="KW-0486">Methionine biosynthesis</keyword>
<reference key="1">
    <citation type="journal article" date="2008" name="J. Bacteriol.">
        <title>The complete genome sequence of Escherichia coli DH10B: insights into the biology of a laboratory workhorse.</title>
        <authorList>
            <person name="Durfee T."/>
            <person name="Nelson R."/>
            <person name="Baldwin S."/>
            <person name="Plunkett G. III"/>
            <person name="Burland V."/>
            <person name="Mau B."/>
            <person name="Petrosino J.F."/>
            <person name="Qin X."/>
            <person name="Muzny D.M."/>
            <person name="Ayele M."/>
            <person name="Gibbs R.A."/>
            <person name="Csorgo B."/>
            <person name="Posfai G."/>
            <person name="Weinstock G.M."/>
            <person name="Blattner F.R."/>
        </authorList>
    </citation>
    <scope>NUCLEOTIDE SEQUENCE [LARGE SCALE GENOMIC DNA]</scope>
    <source>
        <strain>K12 / DH10B</strain>
    </source>
</reference>
<protein>
    <recommendedName>
        <fullName evidence="1">5'-methylthioadenosine/S-adenosylhomocysteine nucleosidase</fullName>
        <shortName evidence="1">MTA/SAH nucleosidase</shortName>
        <shortName evidence="1">MTAN</shortName>
        <ecNumber evidence="1">3.2.2.9</ecNumber>
    </recommendedName>
    <alternativeName>
        <fullName evidence="1">5'-deoxyadenosine nucleosidase</fullName>
        <shortName evidence="1">DOA nucleosidase</shortName>
        <shortName evidence="1">dAdo nucleosidase</shortName>
    </alternativeName>
    <alternativeName>
        <fullName evidence="1">5'-methylthioadenosine nucleosidase</fullName>
        <shortName evidence="1">MTA nucleosidase</shortName>
    </alternativeName>
    <alternativeName>
        <fullName evidence="1">S-adenosylhomocysteine nucleosidase</fullName>
        <shortName evidence="1">AdoHcy nucleosidase</shortName>
        <shortName evidence="1">SAH nucleosidase</shortName>
        <shortName evidence="1">SRH nucleosidase</shortName>
    </alternativeName>
</protein>
<comment type="function">
    <text evidence="1">Catalyzes the irreversible cleavage of the glycosidic bond in both 5'-methylthioadenosine (MTA) and S-adenosylhomocysteine (SAH/AdoHcy) to adenine and the corresponding thioribose, 5'-methylthioribose and S-ribosylhomocysteine, respectively. Also cleaves 5'-deoxyadenosine, a toxic by-product of radical S-adenosylmethionine (SAM) enzymes, into 5-deoxyribose and adenine. Thus, is required for in vivo function of the radical SAM enzymes biotin synthase and lipoic acid synthase, that are inhibited by 5'-deoxyadenosine accumulation.</text>
</comment>
<comment type="catalytic activity">
    <reaction evidence="1">
        <text>S-adenosyl-L-homocysteine + H2O = S-(5-deoxy-D-ribos-5-yl)-L-homocysteine + adenine</text>
        <dbReference type="Rhea" id="RHEA:17805"/>
        <dbReference type="ChEBI" id="CHEBI:15377"/>
        <dbReference type="ChEBI" id="CHEBI:16708"/>
        <dbReference type="ChEBI" id="CHEBI:57856"/>
        <dbReference type="ChEBI" id="CHEBI:58195"/>
        <dbReference type="EC" id="3.2.2.9"/>
    </reaction>
</comment>
<comment type="catalytic activity">
    <reaction evidence="1">
        <text>S-methyl-5'-thioadenosine + H2O = 5-(methylsulfanyl)-D-ribose + adenine</text>
        <dbReference type="Rhea" id="RHEA:13617"/>
        <dbReference type="ChEBI" id="CHEBI:15377"/>
        <dbReference type="ChEBI" id="CHEBI:16708"/>
        <dbReference type="ChEBI" id="CHEBI:17509"/>
        <dbReference type="ChEBI" id="CHEBI:78440"/>
        <dbReference type="EC" id="3.2.2.9"/>
    </reaction>
</comment>
<comment type="catalytic activity">
    <reaction evidence="1">
        <text>5'-deoxyadenosine + H2O = 5-deoxy-D-ribose + adenine</text>
        <dbReference type="Rhea" id="RHEA:29859"/>
        <dbReference type="ChEBI" id="CHEBI:15377"/>
        <dbReference type="ChEBI" id="CHEBI:16708"/>
        <dbReference type="ChEBI" id="CHEBI:17319"/>
        <dbReference type="ChEBI" id="CHEBI:149540"/>
        <dbReference type="EC" id="3.2.2.9"/>
    </reaction>
    <physiologicalReaction direction="left-to-right" evidence="1">
        <dbReference type="Rhea" id="RHEA:29860"/>
    </physiologicalReaction>
</comment>
<comment type="pathway">
    <text evidence="1">Amino-acid biosynthesis; L-methionine biosynthesis via salvage pathway; S-methyl-5-thio-alpha-D-ribose 1-phosphate from S-methyl-5'-thioadenosine (hydrolase route): step 1/2.</text>
</comment>
<comment type="subunit">
    <text evidence="1">Homodimer.</text>
</comment>
<comment type="similarity">
    <text evidence="1">Belongs to the PNP/UDP phosphorylase family. MtnN subfamily.</text>
</comment>